<proteinExistence type="evidence at transcript level"/>
<keyword id="KW-0496">Mitochondrion</keyword>
<keyword id="KW-1185">Reference proteome</keyword>
<keyword id="KW-0808">Transferase</keyword>
<keyword id="KW-0809">Transit peptide</keyword>
<comment type="function">
    <text evidence="1">Key enzyme for ketone body catabolism. Transfers the CoA moiety from succinate to acetoacetate. Formation of the enzyme-CoA intermediate proceeds via an unstable anhydride species formed between the carboxylate groups of the enzyme and substrate (By similarity). Probably play and important roles in the energy metabolism of spermatozoa.</text>
</comment>
<comment type="catalytic activity">
    <reaction evidence="2">
        <text>a 3-oxo acid + succinyl-CoA = a 3-oxoacyl-CoA + succinate</text>
        <dbReference type="Rhea" id="RHEA:24564"/>
        <dbReference type="ChEBI" id="CHEBI:30031"/>
        <dbReference type="ChEBI" id="CHEBI:35973"/>
        <dbReference type="ChEBI" id="CHEBI:57292"/>
        <dbReference type="ChEBI" id="CHEBI:90726"/>
        <dbReference type="EC" id="2.8.3.5"/>
    </reaction>
</comment>
<comment type="pathway">
    <text>Ketone metabolism; succinyl-CoA degradation; acetoacetyl-CoA from succinyl-CoA: step 1/1.</text>
</comment>
<comment type="subunit">
    <text evidence="1">Homodimer.</text>
</comment>
<comment type="subcellular location">
    <subcellularLocation>
        <location evidence="1">Mitochondrion</location>
    </subcellularLocation>
</comment>
<comment type="tissue specificity">
    <text evidence="4">Testis specific. Expressed in late spermatids. Accumulates during spermiogenesis. Also detected in the midpiece of spermatozoa.</text>
</comment>
<comment type="similarity">
    <text evidence="5">Belongs to the 3-oxoacid CoA-transferase family.</text>
</comment>
<organism>
    <name type="scientific">Mus musculus</name>
    <name type="common">Mouse</name>
    <dbReference type="NCBI Taxonomy" id="10090"/>
    <lineage>
        <taxon>Eukaryota</taxon>
        <taxon>Metazoa</taxon>
        <taxon>Chordata</taxon>
        <taxon>Craniata</taxon>
        <taxon>Vertebrata</taxon>
        <taxon>Euteleostomi</taxon>
        <taxon>Mammalia</taxon>
        <taxon>Eutheria</taxon>
        <taxon>Euarchontoglires</taxon>
        <taxon>Glires</taxon>
        <taxon>Rodentia</taxon>
        <taxon>Myomorpha</taxon>
        <taxon>Muroidea</taxon>
        <taxon>Muridae</taxon>
        <taxon>Murinae</taxon>
        <taxon>Mus</taxon>
        <taxon>Mus</taxon>
    </lineage>
</organism>
<gene>
    <name type="primary">Oxct2b</name>
</gene>
<evidence type="ECO:0000250" key="1"/>
<evidence type="ECO:0000255" key="2">
    <source>
        <dbReference type="PROSITE-ProRule" id="PRU10034"/>
    </source>
</evidence>
<evidence type="ECO:0000256" key="3">
    <source>
        <dbReference type="SAM" id="MobiDB-lite"/>
    </source>
</evidence>
<evidence type="ECO:0000269" key="4">
    <source>
    </source>
</evidence>
<evidence type="ECO:0000305" key="5"/>
<accession>Q9ESL0</accession>
<accession>Q2HJ06</accession>
<dbReference type="EC" id="2.8.3.5"/>
<dbReference type="EMBL" id="AB049996">
    <property type="protein sequence ID" value="BAB16879.1"/>
    <property type="molecule type" value="mRNA"/>
</dbReference>
<dbReference type="EMBL" id="AB105455">
    <property type="protein sequence ID" value="BAC87739.1"/>
    <property type="molecule type" value="Genomic_DNA"/>
</dbReference>
<dbReference type="EMBL" id="BC113758">
    <property type="protein sequence ID" value="AAI13759.1"/>
    <property type="molecule type" value="mRNA"/>
</dbReference>
<dbReference type="CCDS" id="CCDS18609.1"/>
<dbReference type="RefSeq" id="NP_862907.2">
    <property type="nucleotide sequence ID" value="NM_181859.3"/>
</dbReference>
<dbReference type="SMR" id="Q9ESL0"/>
<dbReference type="FunCoup" id="Q9ESL0">
    <property type="interactions" value="127"/>
</dbReference>
<dbReference type="STRING" id="10090.ENSMUSP00000099708"/>
<dbReference type="jPOST" id="Q9ESL0"/>
<dbReference type="PaxDb" id="10090-ENSMUSP00000099708"/>
<dbReference type="PeptideAtlas" id="Q9ESL0"/>
<dbReference type="ProteomicsDB" id="256934"/>
<dbReference type="DNASU" id="353371"/>
<dbReference type="GeneID" id="353371"/>
<dbReference type="KEGG" id="mmu:353371"/>
<dbReference type="UCSC" id="uc008uou.2">
    <property type="organism name" value="mouse"/>
</dbReference>
<dbReference type="AGR" id="MGI:2664115"/>
<dbReference type="CTD" id="353371"/>
<dbReference type="MGI" id="MGI:2664115">
    <property type="gene designation" value="Oxct2b"/>
</dbReference>
<dbReference type="eggNOG" id="KOG3822">
    <property type="taxonomic scope" value="Eukaryota"/>
</dbReference>
<dbReference type="InParanoid" id="Q9ESL0"/>
<dbReference type="OrthoDB" id="1933379at2759"/>
<dbReference type="PhylomeDB" id="Q9ESL0"/>
<dbReference type="TreeFam" id="TF313991"/>
<dbReference type="Reactome" id="R-MMU-77108">
    <property type="pathway name" value="Utilization of Ketone Bodies"/>
</dbReference>
<dbReference type="UniPathway" id="UPA00929">
    <property type="reaction ID" value="UER00894"/>
</dbReference>
<dbReference type="BioGRID-ORCS" id="353371">
    <property type="hits" value="2 hits in 58 CRISPR screens"/>
</dbReference>
<dbReference type="PRO" id="PR:Q9ESL0"/>
<dbReference type="Proteomes" id="UP000000589">
    <property type="component" value="Unplaced"/>
</dbReference>
<dbReference type="RNAct" id="Q9ESL0">
    <property type="molecule type" value="protein"/>
</dbReference>
<dbReference type="GO" id="GO:0005739">
    <property type="term" value="C:mitochondrion"/>
    <property type="evidence" value="ECO:0007005"/>
    <property type="project" value="MGI"/>
</dbReference>
<dbReference type="GO" id="GO:0031514">
    <property type="term" value="C:motile cilium"/>
    <property type="evidence" value="ECO:0000247"/>
    <property type="project" value="MGI"/>
</dbReference>
<dbReference type="GO" id="GO:0008260">
    <property type="term" value="F:succinyl-CoA:3-oxo-acid CoA-transferase activity"/>
    <property type="evidence" value="ECO:0007669"/>
    <property type="project" value="UniProtKB-EC"/>
</dbReference>
<dbReference type="GO" id="GO:0006091">
    <property type="term" value="P:generation of precursor metabolites and energy"/>
    <property type="evidence" value="ECO:0000304"/>
    <property type="project" value="MGI"/>
</dbReference>
<dbReference type="GO" id="GO:0046952">
    <property type="term" value="P:ketone body catabolic process"/>
    <property type="evidence" value="ECO:0007669"/>
    <property type="project" value="InterPro"/>
</dbReference>
<dbReference type="FunFam" id="3.40.1080.10:FF:000001">
    <property type="entry name" value="Succinyl-coa:3-ketoacid-coenzyme a transferase subunit b"/>
    <property type="match status" value="1"/>
</dbReference>
<dbReference type="FunFam" id="3.40.1080.10:FF:000002">
    <property type="entry name" value="Succinyl-CoA:3-ketoacid-coenzyme A transferase, mitochondrial"/>
    <property type="match status" value="1"/>
</dbReference>
<dbReference type="Gene3D" id="3.40.1080.10">
    <property type="entry name" value="Glutaconate Coenzyme A-transferase"/>
    <property type="match status" value="2"/>
</dbReference>
<dbReference type="InterPro" id="IPR012792">
    <property type="entry name" value="3-oxoacid_CoA-transf_A"/>
</dbReference>
<dbReference type="InterPro" id="IPR012791">
    <property type="entry name" value="3-oxoacid_CoA-transf_B"/>
</dbReference>
<dbReference type="InterPro" id="IPR014388">
    <property type="entry name" value="3-oxoacid_CoA-transferase"/>
</dbReference>
<dbReference type="InterPro" id="IPR004165">
    <property type="entry name" value="CoA_trans_fam_I"/>
</dbReference>
<dbReference type="InterPro" id="IPR004164">
    <property type="entry name" value="CoA_transf_AS"/>
</dbReference>
<dbReference type="InterPro" id="IPR004163">
    <property type="entry name" value="CoA_transf_BS"/>
</dbReference>
<dbReference type="InterPro" id="IPR037171">
    <property type="entry name" value="NagB/RpiA_transferase-like"/>
</dbReference>
<dbReference type="NCBIfam" id="TIGR02429">
    <property type="entry name" value="pcaI_scoA_fam"/>
    <property type="match status" value="1"/>
</dbReference>
<dbReference type="NCBIfam" id="TIGR02428">
    <property type="entry name" value="pcaJ_scoB_fam"/>
    <property type="match status" value="1"/>
</dbReference>
<dbReference type="PANTHER" id="PTHR13707">
    <property type="entry name" value="KETOACID-COENZYME A TRANSFERASE"/>
    <property type="match status" value="1"/>
</dbReference>
<dbReference type="PANTHER" id="PTHR13707:SF28">
    <property type="entry name" value="SUCCINYL-COA:3-KETOACID COENZYME A TRANSFERASE 2, MITOCHONDRIAL"/>
    <property type="match status" value="1"/>
</dbReference>
<dbReference type="Pfam" id="PF01144">
    <property type="entry name" value="CoA_trans"/>
    <property type="match status" value="2"/>
</dbReference>
<dbReference type="PIRSF" id="PIRSF000858">
    <property type="entry name" value="SCOT-t"/>
    <property type="match status" value="1"/>
</dbReference>
<dbReference type="SMART" id="SM00882">
    <property type="entry name" value="CoA_trans"/>
    <property type="match status" value="2"/>
</dbReference>
<dbReference type="SUPFAM" id="SSF100950">
    <property type="entry name" value="NagB/RpiA/CoA transferase-like"/>
    <property type="match status" value="2"/>
</dbReference>
<dbReference type="PROSITE" id="PS01273">
    <property type="entry name" value="COA_TRANSF_1"/>
    <property type="match status" value="1"/>
</dbReference>
<dbReference type="PROSITE" id="PS01274">
    <property type="entry name" value="COA_TRANSF_2"/>
    <property type="match status" value="1"/>
</dbReference>
<feature type="transit peptide" description="Mitochondrion" evidence="1">
    <location>
        <begin position="1"/>
        <end position="39"/>
    </location>
</feature>
<feature type="chain" id="PRO_0000366211" description="Succinyl-CoA:3-ketoacid coenzyme A transferase 2B, mitochondrial">
    <location>
        <begin position="40"/>
        <end position="520"/>
    </location>
</feature>
<feature type="region of interest" description="Disordered" evidence="3">
    <location>
        <begin position="280"/>
        <end position="299"/>
    </location>
</feature>
<feature type="active site" description="5-glutamyl coenzyme A thioester intermediate" evidence="2">
    <location>
        <position position="342"/>
    </location>
</feature>
<feature type="sequence conflict" description="In Ref. 3; AAI13759." evidence="5" ref="3">
    <original>C</original>
    <variation>G</variation>
    <location>
        <position position="148"/>
    </location>
</feature>
<sequence>MAALRLLAWALPRGVSALRPRPALPHRLIRRYVSDRSGSVHFYTDPVKAVEGVKDGSTVMLGGFGLCGIPENLIGALKTKGVKDLKIVSSNVGVDDFGLGILLASKQVRRVVCSYLGENALCEKLYLAGELELEMTPQGTLAERIRACGTGVPAFYTPTGYGTLVQEGGSPIRYAPDGHLITLSEPREVREFQGRFYLLEHAIRADFALIKGWKADRSGNVIFRGSARNFNVPMCKAADISVVEVEEIVDVGTFAPEDIHIPNIYVDRVIKGPKFEKRIERLTTRDSKPAPGSKDNDPSRTRIIKRAALEFQDGMYANLGIGIPVLASNYISPKMTVYLHSENGILGLGPFPLKNEVDADVINAGKQTVTVVPGGCFFASDDSFAMIRGGHLQLTMLGAMQVSQYGDLANWMVPGKKVKGMGGAMDLVSSKKTRVVVTMEHCTKTKQPKILKKCTMPLTGKRCVDLIITEKAVFEVNHSKGLTLVELWEGSSVDDIKATTACSFAVSPNLKPMQQIKLDA</sequence>
<name>SCO2B_MOUSE</name>
<protein>
    <recommendedName>
        <fullName>Succinyl-CoA:3-ketoacid coenzyme A transferase 2B, mitochondrial</fullName>
        <ecNumber>2.8.3.5</ecNumber>
    </recommendedName>
    <alternativeName>
        <fullName>3-oxoacid CoA-transferase 2B</fullName>
    </alternativeName>
    <alternativeName>
        <fullName>Testis-specific succinyl-CoA:3-oxoacid CoA-transferase 2</fullName>
        <shortName>SCOT-t2</shortName>
    </alternativeName>
</protein>
<reference key="1">
    <citation type="journal article" date="2000" name="Biol. Reprod.">
        <title>Isolation and characterization of a haploid germ cell-specific novel complementary deoxyribonucleic acid; testis-specific homologue of succinyl CoA:3-Oxo acid CoA transferase.</title>
        <authorList>
            <person name="Koga M."/>
            <person name="Tanaka H."/>
            <person name="Yomogida K."/>
            <person name="Nozaki M."/>
            <person name="Tsuchida J."/>
            <person name="Ohta H."/>
            <person name="Nakamura Y."/>
            <person name="Masai K."/>
            <person name="Yoshimura Y."/>
            <person name="Yamanaka M."/>
            <person name="Iguchi N."/>
            <person name="Nojima H."/>
            <person name="Matsumiya K."/>
            <person name="Okuyama A."/>
            <person name="Nihsimune Y."/>
        </authorList>
    </citation>
    <scope>NUCLEOTIDE SEQUENCE [MRNA]</scope>
    <scope>TISSUE SPECIFICITY</scope>
    <source>
        <tissue>Testis</tissue>
    </source>
</reference>
<reference key="2">
    <citation type="journal article" date="2004" name="Genomics">
        <title>Gene structure and evolution of testicular haploid germ cell-specific genes, Oxct2a and Oxct2b.</title>
        <authorList>
            <person name="Onishi M."/>
            <person name="Yasunaga T."/>
            <person name="Tanaka H."/>
            <person name="Nishimune Y."/>
            <person name="Nozaki M."/>
        </authorList>
    </citation>
    <scope>NUCLEOTIDE SEQUENCE [GENOMIC DNA]</scope>
    <source>
        <strain>129/Sv</strain>
    </source>
</reference>
<reference key="3">
    <citation type="journal article" date="2004" name="Genome Res.">
        <title>The status, quality, and expansion of the NIH full-length cDNA project: the Mammalian Gene Collection (MGC).</title>
        <authorList>
            <consortium name="The MGC Project Team"/>
        </authorList>
    </citation>
    <scope>NUCLEOTIDE SEQUENCE [LARGE SCALE MRNA]</scope>
</reference>